<accession>Q9RH74</accession>
<accession>Q89K47</accession>
<evidence type="ECO:0000255" key="1">
    <source>
        <dbReference type="HAMAP-Rule" id="MF_00023"/>
    </source>
</evidence>
<evidence type="ECO:0000256" key="2">
    <source>
        <dbReference type="SAM" id="MobiDB-lite"/>
    </source>
</evidence>
<evidence type="ECO:0000305" key="3"/>
<dbReference type="EMBL" id="AF065159">
    <property type="protein sequence ID" value="AAF04322.1"/>
    <property type="molecule type" value="Genomic_DNA"/>
</dbReference>
<dbReference type="EMBL" id="BA000040">
    <property type="protein sequence ID" value="BAC50335.1"/>
    <property type="molecule type" value="Genomic_DNA"/>
</dbReference>
<dbReference type="RefSeq" id="NP_771710.1">
    <property type="nucleotide sequence ID" value="NC_004463.1"/>
</dbReference>
<dbReference type="RefSeq" id="WP_011087830.1">
    <property type="nucleotide sequence ID" value="NZ_CP011360.1"/>
</dbReference>
<dbReference type="SMR" id="Q9RH74"/>
<dbReference type="FunCoup" id="Q9RH74">
    <property type="interactions" value="561"/>
</dbReference>
<dbReference type="STRING" id="224911.AAV28_22720"/>
<dbReference type="EnsemblBacteria" id="BAC50335">
    <property type="protein sequence ID" value="BAC50335"/>
    <property type="gene ID" value="BAC50335"/>
</dbReference>
<dbReference type="GeneID" id="46492077"/>
<dbReference type="KEGG" id="bja:bll5070"/>
<dbReference type="PATRIC" id="fig|224911.44.peg.4938"/>
<dbReference type="eggNOG" id="COG0691">
    <property type="taxonomic scope" value="Bacteria"/>
</dbReference>
<dbReference type="HOGENOM" id="CLU_108953_0_1_5"/>
<dbReference type="InParanoid" id="Q9RH74"/>
<dbReference type="OrthoDB" id="9805462at2"/>
<dbReference type="PhylomeDB" id="Q9RH74"/>
<dbReference type="Proteomes" id="UP000002526">
    <property type="component" value="Chromosome"/>
</dbReference>
<dbReference type="GO" id="GO:0005829">
    <property type="term" value="C:cytosol"/>
    <property type="evidence" value="ECO:0000318"/>
    <property type="project" value="GO_Central"/>
</dbReference>
<dbReference type="GO" id="GO:0003723">
    <property type="term" value="F:RNA binding"/>
    <property type="evidence" value="ECO:0000318"/>
    <property type="project" value="GO_Central"/>
</dbReference>
<dbReference type="GO" id="GO:0070929">
    <property type="term" value="P:trans-translation"/>
    <property type="evidence" value="ECO:0007669"/>
    <property type="project" value="UniProtKB-UniRule"/>
</dbReference>
<dbReference type="CDD" id="cd09294">
    <property type="entry name" value="SmpB"/>
    <property type="match status" value="1"/>
</dbReference>
<dbReference type="Gene3D" id="2.40.280.10">
    <property type="match status" value="1"/>
</dbReference>
<dbReference type="HAMAP" id="MF_00023">
    <property type="entry name" value="SmpB"/>
    <property type="match status" value="1"/>
</dbReference>
<dbReference type="InterPro" id="IPR023620">
    <property type="entry name" value="SmpB"/>
</dbReference>
<dbReference type="InterPro" id="IPR000037">
    <property type="entry name" value="SsrA-bd_prot"/>
</dbReference>
<dbReference type="InterPro" id="IPR020081">
    <property type="entry name" value="SsrA-bd_prot_CS"/>
</dbReference>
<dbReference type="NCBIfam" id="NF003843">
    <property type="entry name" value="PRK05422.1"/>
    <property type="match status" value="1"/>
</dbReference>
<dbReference type="NCBIfam" id="TIGR00086">
    <property type="entry name" value="smpB"/>
    <property type="match status" value="1"/>
</dbReference>
<dbReference type="PANTHER" id="PTHR30308:SF2">
    <property type="entry name" value="SSRA-BINDING PROTEIN"/>
    <property type="match status" value="1"/>
</dbReference>
<dbReference type="PANTHER" id="PTHR30308">
    <property type="entry name" value="TMRNA-BINDING COMPONENT OF TRANS-TRANSLATION TAGGING COMPLEX"/>
    <property type="match status" value="1"/>
</dbReference>
<dbReference type="Pfam" id="PF01668">
    <property type="entry name" value="SmpB"/>
    <property type="match status" value="1"/>
</dbReference>
<dbReference type="SUPFAM" id="SSF74982">
    <property type="entry name" value="Small protein B (SmpB)"/>
    <property type="match status" value="1"/>
</dbReference>
<dbReference type="PROSITE" id="PS01317">
    <property type="entry name" value="SSRP"/>
    <property type="match status" value="1"/>
</dbReference>
<keyword id="KW-0963">Cytoplasm</keyword>
<keyword id="KW-1185">Reference proteome</keyword>
<keyword id="KW-0694">RNA-binding</keyword>
<comment type="function">
    <text evidence="1">Required for rescue of stalled ribosomes mediated by trans-translation. Binds to transfer-messenger RNA (tmRNA), required for stable association of tmRNA with ribosomes. tmRNA and SmpB together mimic tRNA shape, replacing the anticodon stem-loop with SmpB. tmRNA is encoded by the ssrA gene; the 2 termini fold to resemble tRNA(Ala) and it encodes a 'tag peptide', a short internal open reading frame. During trans-translation Ala-aminoacylated tmRNA acts like a tRNA, entering the A-site of stalled ribosomes, displacing the stalled mRNA. The ribosome then switches to translate the ORF on the tmRNA; the nascent peptide is terminated with the 'tag peptide' encoded by the tmRNA and targeted for degradation. The ribosome is freed to recommence translation, which seems to be the essential function of trans-translation.</text>
</comment>
<comment type="subcellular location">
    <subcellularLocation>
        <location evidence="1">Cytoplasm</location>
    </subcellularLocation>
    <text evidence="1">The tmRNA-SmpB complex associates with stalled 70S ribosomes.</text>
</comment>
<comment type="similarity">
    <text evidence="1">Belongs to the SmpB family.</text>
</comment>
<protein>
    <recommendedName>
        <fullName evidence="1">SsrA-binding protein</fullName>
    </recommendedName>
    <alternativeName>
        <fullName evidence="1">Small protein B</fullName>
    </alternativeName>
</protein>
<proteinExistence type="inferred from homology"/>
<sequence length="157" mass="18135">MADKNERPIKVMAENRKARFNYAIEDTIEAGIALTGTEVKSIRNGKSTIAESYADSKNGEIWLINATIPEYLQGNRFNHEPKRPRKLLLHRRQINKLIGAVDREGMTLIPLKLYFNERGRAKLQLAVAKGKKLHDKRETEKKRDWSREKGRLLRARG</sequence>
<feature type="chain" id="PRO_0000102917" description="SsrA-binding protein">
    <location>
        <begin position="1"/>
        <end position="157"/>
    </location>
</feature>
<feature type="region of interest" description="Disordered" evidence="2">
    <location>
        <begin position="133"/>
        <end position="157"/>
    </location>
</feature>
<feature type="compositionally biased region" description="Basic and acidic residues" evidence="2">
    <location>
        <begin position="135"/>
        <end position="151"/>
    </location>
</feature>
<feature type="sequence conflict" description="In Ref. 1; AAF04322." evidence="3" ref="1">
    <original>A</original>
    <variation>P</variation>
    <location>
        <position position="100"/>
    </location>
</feature>
<feature type="sequence conflict" description="In Ref. 1; AAF04322." evidence="3" ref="1">
    <original>E</original>
    <variation>G</variation>
    <location>
        <position position="117"/>
    </location>
</feature>
<feature type="sequence conflict" description="In Ref. 1; AAF04322." evidence="3" ref="1">
    <original>SREKGRLLR</original>
    <variation>EPGRRSACCG</variation>
    <location>
        <begin position="146"/>
        <end position="154"/>
    </location>
</feature>
<name>SSRP_BRADU</name>
<organism>
    <name type="scientific">Bradyrhizobium diazoefficiens (strain JCM 10833 / BCRC 13528 / IAM 13628 / NBRC 14792 / USDA 110)</name>
    <dbReference type="NCBI Taxonomy" id="224911"/>
    <lineage>
        <taxon>Bacteria</taxon>
        <taxon>Pseudomonadati</taxon>
        <taxon>Pseudomonadota</taxon>
        <taxon>Alphaproteobacteria</taxon>
        <taxon>Hyphomicrobiales</taxon>
        <taxon>Nitrobacteraceae</taxon>
        <taxon>Bradyrhizobium</taxon>
    </lineage>
</organism>
<reference key="1">
    <citation type="submission" date="2000-01" db="EMBL/GenBank/DDBJ databases">
        <title>Extended DNA sequencing in the upstream region of sipF in Bradyrhizobium japonicum.</title>
        <authorList>
            <person name="Mueller P."/>
            <person name="Stingel D."/>
        </authorList>
    </citation>
    <scope>NUCLEOTIDE SEQUENCE [GENOMIC DNA]</scope>
    <source>
        <strain>USDA 110spc4</strain>
    </source>
</reference>
<reference key="2">
    <citation type="journal article" date="2002" name="DNA Res.">
        <title>Complete genomic sequence of nitrogen-fixing symbiotic bacterium Bradyrhizobium japonicum USDA110.</title>
        <authorList>
            <person name="Kaneko T."/>
            <person name="Nakamura Y."/>
            <person name="Sato S."/>
            <person name="Minamisawa K."/>
            <person name="Uchiumi T."/>
            <person name="Sasamoto S."/>
            <person name="Watanabe A."/>
            <person name="Idesawa K."/>
            <person name="Iriguchi M."/>
            <person name="Kawashima K."/>
            <person name="Kohara M."/>
            <person name="Matsumoto M."/>
            <person name="Shimpo S."/>
            <person name="Tsuruoka H."/>
            <person name="Wada T."/>
            <person name="Yamada M."/>
            <person name="Tabata S."/>
        </authorList>
    </citation>
    <scope>NUCLEOTIDE SEQUENCE [LARGE SCALE GENOMIC DNA]</scope>
    <source>
        <strain>JCM 10833 / BCRC 13528 / IAM 13628 / NBRC 14792 / USDA 110</strain>
    </source>
</reference>
<gene>
    <name evidence="1" type="primary">smpB</name>
    <name type="ordered locus">bll5070</name>
</gene>